<sequence>MKQNLLAVETWYMLILSFRFLFFSRNYNLILCDYLVNTQTVNRVVMAIRSSKRVGKPLFLRYIVMISLKRLPKKCRCGGSPASLPEKYVIMSNKLPYYTNTELDYVIHLDQIDRDL</sequence>
<accession>O13550</accession>
<comment type="subcellular location">
    <subcellularLocation>
        <location evidence="2">Membrane</location>
        <topology evidence="2">Single-pass membrane protein</topology>
    </subcellularLocation>
</comment>
<comment type="miscellaneous">
    <text evidence="2">Partially overlaps DCS1.</text>
</comment>
<comment type="caution">
    <text evidence="3">Product of a dubious gene prediction unlikely to encode a functional protein. Because of that it is not part of the S.cerevisiae S288c complete/reference proteome set.</text>
</comment>
<evidence type="ECO:0000255" key="1"/>
<evidence type="ECO:0000305" key="2"/>
<evidence type="ECO:0000305" key="3">
    <source>
    </source>
</evidence>
<organism>
    <name type="scientific">Saccharomyces cerevisiae (strain ATCC 204508 / S288c)</name>
    <name type="common">Baker's yeast</name>
    <dbReference type="NCBI Taxonomy" id="559292"/>
    <lineage>
        <taxon>Eukaryota</taxon>
        <taxon>Fungi</taxon>
        <taxon>Dikarya</taxon>
        <taxon>Ascomycota</taxon>
        <taxon>Saccharomycotina</taxon>
        <taxon>Saccharomycetes</taxon>
        <taxon>Saccharomycetales</taxon>
        <taxon>Saccharomycetaceae</taxon>
        <taxon>Saccharomyces</taxon>
    </lineage>
</organism>
<reference key="1">
    <citation type="journal article" date="1997" name="Nature">
        <title>The nucleotide sequence of Saccharomyces cerevisiae chromosome XII.</title>
        <authorList>
            <person name="Johnston M."/>
            <person name="Hillier L.W."/>
            <person name="Riles L."/>
            <person name="Albermann K."/>
            <person name="Andre B."/>
            <person name="Ansorge W."/>
            <person name="Benes V."/>
            <person name="Brueckner M."/>
            <person name="Delius H."/>
            <person name="Dubois E."/>
            <person name="Duesterhoeft A."/>
            <person name="Entian K.-D."/>
            <person name="Floeth M."/>
            <person name="Goffeau A."/>
            <person name="Hebling U."/>
            <person name="Heumann K."/>
            <person name="Heuss-Neitzel D."/>
            <person name="Hilbert H."/>
            <person name="Hilger F."/>
            <person name="Kleine K."/>
            <person name="Koetter P."/>
            <person name="Louis E.J."/>
            <person name="Messenguy F."/>
            <person name="Mewes H.-W."/>
            <person name="Miosga T."/>
            <person name="Moestl D."/>
            <person name="Mueller-Auer S."/>
            <person name="Nentwich U."/>
            <person name="Obermaier B."/>
            <person name="Piravandi E."/>
            <person name="Pohl T.M."/>
            <person name="Portetelle D."/>
            <person name="Purnelle B."/>
            <person name="Rechmann S."/>
            <person name="Rieger M."/>
            <person name="Rinke M."/>
            <person name="Rose M."/>
            <person name="Scharfe M."/>
            <person name="Scherens B."/>
            <person name="Scholler P."/>
            <person name="Schwager C."/>
            <person name="Schwarz S."/>
            <person name="Underwood A.P."/>
            <person name="Urrestarazu L.A."/>
            <person name="Vandenbol M."/>
            <person name="Verhasselt P."/>
            <person name="Vierendeels F."/>
            <person name="Voet M."/>
            <person name="Volckaert G."/>
            <person name="Voss H."/>
            <person name="Wambutt R."/>
            <person name="Wedler E."/>
            <person name="Wedler H."/>
            <person name="Zimmermann F.K."/>
            <person name="Zollner A."/>
            <person name="Hani J."/>
            <person name="Hoheisel J.D."/>
        </authorList>
    </citation>
    <scope>NUCLEOTIDE SEQUENCE [LARGE SCALE GENOMIC DNA]</scope>
    <source>
        <strain>ATCC 204508 / S288c</strain>
    </source>
</reference>
<reference key="2">
    <citation type="journal article" date="2014" name="G3 (Bethesda)">
        <title>The reference genome sequence of Saccharomyces cerevisiae: Then and now.</title>
        <authorList>
            <person name="Engel S.R."/>
            <person name="Dietrich F.S."/>
            <person name="Fisk D.G."/>
            <person name="Binkley G."/>
            <person name="Balakrishnan R."/>
            <person name="Costanzo M.C."/>
            <person name="Dwight S.S."/>
            <person name="Hitz B.C."/>
            <person name="Karra K."/>
            <person name="Nash R.S."/>
            <person name="Weng S."/>
            <person name="Wong E.D."/>
            <person name="Lloyd P."/>
            <person name="Skrzypek M.S."/>
            <person name="Miyasato S.R."/>
            <person name="Simison M."/>
            <person name="Cherry J.M."/>
        </authorList>
    </citation>
    <scope>GENOME REANNOTATION</scope>
    <source>
        <strain>ATCC 204508 / S288c</strain>
    </source>
</reference>
<dbReference type="EMBL" id="U17244">
    <property type="protein sequence ID" value="AAB67386.1"/>
    <property type="molecule type" value="Genomic_DNA"/>
</dbReference>
<dbReference type="PIR" id="S70038">
    <property type="entry name" value="S70038"/>
</dbReference>
<dbReference type="DIP" id="DIP-1422N"/>
<dbReference type="IntAct" id="O13550">
    <property type="interactions" value="9"/>
</dbReference>
<dbReference type="MINT" id="O13550"/>
<dbReference type="STRING" id="4932.YLR269C"/>
<dbReference type="PaxDb" id="4932-YLR269C"/>
<dbReference type="EnsemblFungi" id="YLR269C_mRNA">
    <property type="protein sequence ID" value="YLR269C"/>
    <property type="gene ID" value="YLR269C"/>
</dbReference>
<dbReference type="AGR" id="SGD:S000004259"/>
<dbReference type="SGD" id="S000004259">
    <property type="gene designation" value="YLR269C"/>
</dbReference>
<dbReference type="HOGENOM" id="CLU_2098747_0_0_1"/>
<dbReference type="GO" id="GO:0016020">
    <property type="term" value="C:membrane"/>
    <property type="evidence" value="ECO:0007669"/>
    <property type="project" value="UniProtKB-SubCell"/>
</dbReference>
<dbReference type="GO" id="GO:0030437">
    <property type="term" value="P:ascospore formation"/>
    <property type="evidence" value="ECO:0007001"/>
    <property type="project" value="SGD"/>
</dbReference>
<name>YL269_YEAST</name>
<protein>
    <recommendedName>
        <fullName>Putative uncharacterized protein YLR269C</fullName>
    </recommendedName>
</protein>
<proteinExistence type="uncertain"/>
<keyword id="KW-0472">Membrane</keyword>
<keyword id="KW-0812">Transmembrane</keyword>
<keyword id="KW-1133">Transmembrane helix</keyword>
<feature type="chain" id="PRO_0000299627" description="Putative uncharacterized protein YLR269C">
    <location>
        <begin position="1"/>
        <end position="116"/>
    </location>
</feature>
<feature type="transmembrane region" description="Helical" evidence="1">
    <location>
        <begin position="5"/>
        <end position="23"/>
    </location>
</feature>
<gene>
    <name type="ordered locus">YLR269C</name>
</gene>